<gene>
    <name type="primary">PHYE</name>
    <name type="ordered locus">At4g18130</name>
    <name type="ORF">F15J5.100</name>
</gene>
<keyword id="KW-0157">Chromophore</keyword>
<keyword id="KW-0600">Photoreceptor protein</keyword>
<keyword id="KW-0675">Receptor</keyword>
<keyword id="KW-1185">Reference proteome</keyword>
<keyword id="KW-0677">Repeat</keyword>
<keyword id="KW-0716">Sensory transduction</keyword>
<keyword id="KW-0804">Transcription</keyword>
<keyword id="KW-0805">Transcription regulation</keyword>
<evidence type="ECO:0000250" key="1"/>
<evidence type="ECO:0000255" key="2">
    <source>
        <dbReference type="PROSITE-ProRule" id="PRU00107"/>
    </source>
</evidence>
<evidence type="ECO:0000255" key="3">
    <source>
        <dbReference type="PROSITE-ProRule" id="PRU00140"/>
    </source>
</evidence>
<evidence type="ECO:0000256" key="4">
    <source>
        <dbReference type="SAM" id="MobiDB-lite"/>
    </source>
</evidence>
<evidence type="ECO:0000305" key="5"/>
<organism>
    <name type="scientific">Arabidopsis thaliana</name>
    <name type="common">Mouse-ear cress</name>
    <dbReference type="NCBI Taxonomy" id="3702"/>
    <lineage>
        <taxon>Eukaryota</taxon>
        <taxon>Viridiplantae</taxon>
        <taxon>Streptophyta</taxon>
        <taxon>Embryophyta</taxon>
        <taxon>Tracheophyta</taxon>
        <taxon>Spermatophyta</taxon>
        <taxon>Magnoliopsida</taxon>
        <taxon>eudicotyledons</taxon>
        <taxon>Gunneridae</taxon>
        <taxon>Pentapetalae</taxon>
        <taxon>rosids</taxon>
        <taxon>malvids</taxon>
        <taxon>Brassicales</taxon>
        <taxon>Brassicaceae</taxon>
        <taxon>Camelineae</taxon>
        <taxon>Arabidopsis</taxon>
    </lineage>
</organism>
<accession>P42498</accession>
<accession>Q56Y99</accession>
<protein>
    <recommendedName>
        <fullName>Phytochrome E</fullName>
    </recommendedName>
</protein>
<sequence length="1112" mass="122516">MGFESSSSAASNMKPQPQKSNTAQYSVDAALFADFAQSIYTGKSFNYSKSVISPPNHVPDEHITAYLSNIQRGGLVQPFGCLIAVEEPSFRILGLSDNSSDFLGLLSLPSTSHSGEFDKVKGLIGIDARTLFTPSSGASLSKAASFTEISLLNPVLVHSRTTQKPFYAILHRIDAGIVMDLEPAKSGDPALTLAGAVQSQKLAVRAISRLQSLPGGDIGALCDTVVEDVQRLTGYDRVMVYQFHEDDHGEVVSEIRRSDLEPYLGLHYPATDIPQAARFLFKQNRVRMICDCNATPVKVVQSEELKRPLCLVNSTLRAPHGCHTQYMANMGSVASLALAIVVKGKDSSKLWGLVVGHHCSPRYVPFPLRYACEFLMQAFGLQLQMELQLASQLAEKKAMRTQTLLCDMLLRDTVSAIVTQSPGIMDLVKCDGAALYYKGKCWLVGVTPNESQVKDLVNWLVENHGDDSTGLTTDSLVDAGYPGAISLGDAVCGVAAAGFSSKDYLLWFRSNTASAIKWGGAKHHPKDKDDAGRMHPRSSFTAFLEVAKSRSLPWEISEIDAIHSLRLIMRESFTSSRPVLSGNGVARDANELTSFVCEMVRVIETATAPIFGVDSSGCINGWNKKTAEMTGLLASEAMGKSLADEIVQEESRAALESLLCKALQGEEEKSVMLKLRKFGQNNHPDYSSDVCVLVNSCTSRDYTENIIGVCFVGQDITSEKAITDRFIRLQGDYKTIVQSLNPLIPPIFASDENACCSEWNAAMEKLTGWSKHEVIGKMLPGEVFGVFCKVKCQDSLTKFLISLYQGIAGDNVPESSLVEFFNKEGKYIEASLTANKSTNIEGKVIRCFFFLQIINKESGLSCPELKESAQSLNELTYVRQEIKNPLNGIRFAHKLLESSEISASQRQFLETSDACEKQITTIIESTDLKSIEEGKLQLETEEFRLENILDTIISQVMIILRERNSQLRVEVAEEIKTLPLNGDRVKLQLILADLLRNIVNHAPFPNSWVGISISPGQELSRDNGRYIHLQFRMIHPGKGLPSEMLSDMFETRDGWVTPDGLGLKLSRKLLEQMNGRVSYVREDERCFFQVDLQVKTMLGVESRGTEGSSSIK</sequence>
<name>PHYE_ARATH</name>
<proteinExistence type="evidence at protein level"/>
<feature type="chain" id="PRO_0000171966" description="Phytochrome E">
    <location>
        <begin position="1"/>
        <end position="1112"/>
    </location>
</feature>
<feature type="domain" description="GAF">
    <location>
        <begin position="217"/>
        <end position="387"/>
    </location>
</feature>
<feature type="domain" description="PAS 1" evidence="3">
    <location>
        <begin position="595"/>
        <end position="666"/>
    </location>
</feature>
<feature type="domain" description="PAS 2" evidence="3">
    <location>
        <begin position="732"/>
        <end position="803"/>
    </location>
</feature>
<feature type="domain" description="Histidine kinase" evidence="2">
    <location>
        <begin position="877"/>
        <end position="1096"/>
    </location>
</feature>
<feature type="region of interest" description="Disordered" evidence="4">
    <location>
        <begin position="1"/>
        <end position="20"/>
    </location>
</feature>
<feature type="binding site" description="covalent" evidence="1">
    <location>
        <position position="322"/>
    </location>
    <ligand>
        <name>phytochromobilin</name>
        <dbReference type="ChEBI" id="CHEBI:189064"/>
    </ligand>
</feature>
<feature type="sequence conflict" description="In Ref. 1; CAA54075 and 2; CAB53654/CAB78815." evidence="5" ref="1 2">
    <original>G</original>
    <variation>E</variation>
    <location>
        <position position="498"/>
    </location>
</feature>
<dbReference type="EMBL" id="X76610">
    <property type="protein sequence ID" value="CAA54075.1"/>
    <property type="molecule type" value="Genomic_DNA"/>
</dbReference>
<dbReference type="EMBL" id="AL110123">
    <property type="protein sequence ID" value="CAB53654.1"/>
    <property type="molecule type" value="Genomic_DNA"/>
</dbReference>
<dbReference type="EMBL" id="AL161548">
    <property type="protein sequence ID" value="CAB78815.1"/>
    <property type="molecule type" value="Genomic_DNA"/>
</dbReference>
<dbReference type="EMBL" id="CP002687">
    <property type="protein sequence ID" value="AEE84000.1"/>
    <property type="molecule type" value="Genomic_DNA"/>
</dbReference>
<dbReference type="EMBL" id="AK221424">
    <property type="protein sequence ID" value="BAD94419.1"/>
    <property type="molecule type" value="mRNA"/>
</dbReference>
<dbReference type="PIR" id="S46313">
    <property type="entry name" value="S46313"/>
</dbReference>
<dbReference type="RefSeq" id="NP_193547.4">
    <property type="nucleotide sequence ID" value="NM_117923.8"/>
</dbReference>
<dbReference type="SMR" id="P42498"/>
<dbReference type="BioGRID" id="12831">
    <property type="interactions" value="6"/>
</dbReference>
<dbReference type="FunCoup" id="P42498">
    <property type="interactions" value="67"/>
</dbReference>
<dbReference type="IntAct" id="P42498">
    <property type="interactions" value="2"/>
</dbReference>
<dbReference type="STRING" id="3702.P42498"/>
<dbReference type="iPTMnet" id="P42498"/>
<dbReference type="PaxDb" id="3702-AT4G18130.1"/>
<dbReference type="ProteomicsDB" id="236755"/>
<dbReference type="EnsemblPlants" id="AT4G18130.1">
    <property type="protein sequence ID" value="AT4G18130.1"/>
    <property type="gene ID" value="AT4G18130"/>
</dbReference>
<dbReference type="GeneID" id="827538"/>
<dbReference type="Gramene" id="AT4G18130.1">
    <property type="protein sequence ID" value="AT4G18130.1"/>
    <property type="gene ID" value="AT4G18130"/>
</dbReference>
<dbReference type="KEGG" id="ath:AT4G18130"/>
<dbReference type="Araport" id="AT4G18130"/>
<dbReference type="TAIR" id="AT4G18130">
    <property type="gene designation" value="PHYE"/>
</dbReference>
<dbReference type="eggNOG" id="ENOG502R3WG">
    <property type="taxonomic scope" value="Eukaryota"/>
</dbReference>
<dbReference type="HOGENOM" id="CLU_010418_0_0_1"/>
<dbReference type="InParanoid" id="P42498"/>
<dbReference type="OMA" id="GGKCWLL"/>
<dbReference type="PRO" id="PR:P42498"/>
<dbReference type="Proteomes" id="UP000006548">
    <property type="component" value="Chromosome 4"/>
</dbReference>
<dbReference type="ExpressionAtlas" id="P42498">
    <property type="expression patterns" value="baseline and differential"/>
</dbReference>
<dbReference type="GO" id="GO:0043231">
    <property type="term" value="C:intracellular membrane-bounded organelle"/>
    <property type="evidence" value="ECO:0007669"/>
    <property type="project" value="UniProtKB-ARBA"/>
</dbReference>
<dbReference type="GO" id="GO:0000155">
    <property type="term" value="F:phosphorelay sensor kinase activity"/>
    <property type="evidence" value="ECO:0007669"/>
    <property type="project" value="InterPro"/>
</dbReference>
<dbReference type="GO" id="GO:0009881">
    <property type="term" value="F:photoreceptor activity"/>
    <property type="evidence" value="ECO:0007669"/>
    <property type="project" value="UniProtKB-KW"/>
</dbReference>
<dbReference type="GO" id="GO:0042803">
    <property type="term" value="F:protein homodimerization activity"/>
    <property type="evidence" value="ECO:0007669"/>
    <property type="project" value="InterPro"/>
</dbReference>
<dbReference type="GO" id="GO:0009584">
    <property type="term" value="P:detection of visible light"/>
    <property type="evidence" value="ECO:0007669"/>
    <property type="project" value="InterPro"/>
</dbReference>
<dbReference type="GO" id="GO:0009585">
    <property type="term" value="P:red, far-red light phototransduction"/>
    <property type="evidence" value="ECO:0007669"/>
    <property type="project" value="InterPro"/>
</dbReference>
<dbReference type="GO" id="GO:0006355">
    <property type="term" value="P:regulation of DNA-templated transcription"/>
    <property type="evidence" value="ECO:0007669"/>
    <property type="project" value="InterPro"/>
</dbReference>
<dbReference type="CDD" id="cd16932">
    <property type="entry name" value="HATPase_Phy-like"/>
    <property type="match status" value="1"/>
</dbReference>
<dbReference type="CDD" id="cd00082">
    <property type="entry name" value="HisKA"/>
    <property type="match status" value="1"/>
</dbReference>
<dbReference type="CDD" id="cd00130">
    <property type="entry name" value="PAS"/>
    <property type="match status" value="2"/>
</dbReference>
<dbReference type="FunFam" id="3.30.450.20:FF:000034">
    <property type="entry name" value="Phytochrome"/>
    <property type="match status" value="1"/>
</dbReference>
<dbReference type="FunFam" id="3.30.450.20:FF:000039">
    <property type="entry name" value="Phytochrome"/>
    <property type="match status" value="1"/>
</dbReference>
<dbReference type="FunFam" id="3.30.450.270:FF:000001">
    <property type="entry name" value="Phytochrome"/>
    <property type="match status" value="1"/>
</dbReference>
<dbReference type="Gene3D" id="3.30.450.270">
    <property type="match status" value="1"/>
</dbReference>
<dbReference type="Gene3D" id="3.30.450.40">
    <property type="match status" value="1"/>
</dbReference>
<dbReference type="Gene3D" id="3.30.565.10">
    <property type="entry name" value="Histidine kinase-like ATPase, C-terminal domain"/>
    <property type="match status" value="1"/>
</dbReference>
<dbReference type="Gene3D" id="3.30.450.20">
    <property type="entry name" value="PAS domain"/>
    <property type="match status" value="3"/>
</dbReference>
<dbReference type="InterPro" id="IPR003018">
    <property type="entry name" value="GAF"/>
</dbReference>
<dbReference type="InterPro" id="IPR029016">
    <property type="entry name" value="GAF-like_dom_sf"/>
</dbReference>
<dbReference type="InterPro" id="IPR036890">
    <property type="entry name" value="HATPase_C_sf"/>
</dbReference>
<dbReference type="InterPro" id="IPR005467">
    <property type="entry name" value="His_kinase_dom"/>
</dbReference>
<dbReference type="InterPro" id="IPR003661">
    <property type="entry name" value="HisK_dim/P_dom"/>
</dbReference>
<dbReference type="InterPro" id="IPR000014">
    <property type="entry name" value="PAS"/>
</dbReference>
<dbReference type="InterPro" id="IPR035965">
    <property type="entry name" value="PAS-like_dom_sf"/>
</dbReference>
<dbReference type="InterPro" id="IPR013654">
    <property type="entry name" value="PAS_2"/>
</dbReference>
<dbReference type="InterPro" id="IPR013767">
    <property type="entry name" value="PAS_fold"/>
</dbReference>
<dbReference type="InterPro" id="IPR044767">
    <property type="entry name" value="Phy_HATPase-like"/>
</dbReference>
<dbReference type="InterPro" id="IPR016132">
    <property type="entry name" value="Phyto_chromo_attachment"/>
</dbReference>
<dbReference type="InterPro" id="IPR013516">
    <property type="entry name" value="Phyto_chromo_BS"/>
</dbReference>
<dbReference type="InterPro" id="IPR001294">
    <property type="entry name" value="Phytochrome"/>
</dbReference>
<dbReference type="InterPro" id="IPR012129">
    <property type="entry name" value="Phytochrome_A-E"/>
</dbReference>
<dbReference type="InterPro" id="IPR013515">
    <property type="entry name" value="Phytochrome_cen-reg"/>
</dbReference>
<dbReference type="InterPro" id="IPR043150">
    <property type="entry name" value="Phytochrome_PHY_sf"/>
</dbReference>
<dbReference type="NCBIfam" id="TIGR00229">
    <property type="entry name" value="sensory_box"/>
    <property type="match status" value="1"/>
</dbReference>
<dbReference type="PANTHER" id="PTHR47876">
    <property type="entry name" value="OS08G0260000 PROTEIN"/>
    <property type="match status" value="1"/>
</dbReference>
<dbReference type="PANTHER" id="PTHR47876:SF3">
    <property type="entry name" value="PHYTOCHROME 1"/>
    <property type="match status" value="1"/>
</dbReference>
<dbReference type="Pfam" id="PF01590">
    <property type="entry name" value="GAF"/>
    <property type="match status" value="1"/>
</dbReference>
<dbReference type="Pfam" id="PF02518">
    <property type="entry name" value="HATPase_c"/>
    <property type="match status" value="1"/>
</dbReference>
<dbReference type="Pfam" id="PF00512">
    <property type="entry name" value="HisKA"/>
    <property type="match status" value="1"/>
</dbReference>
<dbReference type="Pfam" id="PF00989">
    <property type="entry name" value="PAS"/>
    <property type="match status" value="2"/>
</dbReference>
<dbReference type="Pfam" id="PF08446">
    <property type="entry name" value="PAS_2"/>
    <property type="match status" value="1"/>
</dbReference>
<dbReference type="Pfam" id="PF00360">
    <property type="entry name" value="PHY"/>
    <property type="match status" value="1"/>
</dbReference>
<dbReference type="PIRSF" id="PIRSF000084">
    <property type="entry name" value="Phytochrome"/>
    <property type="match status" value="1"/>
</dbReference>
<dbReference type="PRINTS" id="PR01033">
    <property type="entry name" value="PHYTOCHROME"/>
</dbReference>
<dbReference type="SMART" id="SM00065">
    <property type="entry name" value="GAF"/>
    <property type="match status" value="1"/>
</dbReference>
<dbReference type="SMART" id="SM00387">
    <property type="entry name" value="HATPase_c"/>
    <property type="match status" value="1"/>
</dbReference>
<dbReference type="SMART" id="SM00388">
    <property type="entry name" value="HisKA"/>
    <property type="match status" value="1"/>
</dbReference>
<dbReference type="SMART" id="SM00091">
    <property type="entry name" value="PAS"/>
    <property type="match status" value="2"/>
</dbReference>
<dbReference type="SUPFAM" id="SSF55874">
    <property type="entry name" value="ATPase domain of HSP90 chaperone/DNA topoisomerase II/histidine kinase"/>
    <property type="match status" value="1"/>
</dbReference>
<dbReference type="SUPFAM" id="SSF55781">
    <property type="entry name" value="GAF domain-like"/>
    <property type="match status" value="2"/>
</dbReference>
<dbReference type="SUPFAM" id="SSF55785">
    <property type="entry name" value="PYP-like sensor domain (PAS domain)"/>
    <property type="match status" value="3"/>
</dbReference>
<dbReference type="PROSITE" id="PS50109">
    <property type="entry name" value="HIS_KIN"/>
    <property type="match status" value="1"/>
</dbReference>
<dbReference type="PROSITE" id="PS50112">
    <property type="entry name" value="PAS"/>
    <property type="match status" value="2"/>
</dbReference>
<dbReference type="PROSITE" id="PS00245">
    <property type="entry name" value="PHYTOCHROME_1"/>
    <property type="match status" value="1"/>
</dbReference>
<dbReference type="PROSITE" id="PS50046">
    <property type="entry name" value="PHYTOCHROME_2"/>
    <property type="match status" value="1"/>
</dbReference>
<comment type="function">
    <text>Regulatory photoreceptor which exists in two forms that are reversibly interconvertible by light: the Pr form that absorbs maximally in the red region of the spectrum and the Pfr form that absorbs maximally in the far-red region. Photoconversion of Pr to Pfr induces an array of morphogenic responses, whereas reconversion of Pfr to Pr cancels the induction of those responses. Pfr controls the expression of a number of nuclear genes including those encoding the small subunit of ribulose-bisphosphate carboxylase, chlorophyll A/B binding protein, protochlorophyllide reductase, rRNA, etc. It also controls the expression of its own gene(s) in a negative feedback fashion.</text>
</comment>
<comment type="subunit">
    <text>Homodimer.</text>
</comment>
<comment type="interaction">
    <interactant intactId="EBI-624404">
        <id>P42498</id>
    </interactant>
    <interactant intactId="EBI-300727">
        <id>P14713</id>
        <label>PHYB</label>
    </interactant>
    <organismsDiffer>false</organismsDiffer>
    <experiments>5</experiments>
</comment>
<comment type="interaction">
    <interactant intactId="EBI-624404">
        <id>P42498</id>
    </interactant>
    <interactant intactId="EBI-624382">
        <id>P42497</id>
        <label>PHYD</label>
    </interactant>
    <organismsDiffer>false</organismsDiffer>
    <experiments>4</experiments>
</comment>
<comment type="PTM">
    <text evidence="1">Contains one covalently linked phytochromobilin chromophore.</text>
</comment>
<comment type="similarity">
    <text evidence="5">Belongs to the phytochrome family.</text>
</comment>
<reference key="1">
    <citation type="journal article" date="1994" name="Plant Mol. Biol.">
        <title>The phytochrome apoprotein family in Arabidopsis is encoded by five genes: the sequences and expression of PHYD and PHYE.</title>
        <authorList>
            <person name="Clack T."/>
            <person name="Mathews S."/>
            <person name="Sharrock R.A."/>
        </authorList>
    </citation>
    <scope>NUCLEOTIDE SEQUENCE [GENOMIC DNA]</scope>
    <source>
        <strain>cv. Landsberg erecta</strain>
    </source>
</reference>
<reference key="2">
    <citation type="journal article" date="1999" name="Nature">
        <title>Sequence and analysis of chromosome 4 of the plant Arabidopsis thaliana.</title>
        <authorList>
            <person name="Mayer K.F.X."/>
            <person name="Schueller C."/>
            <person name="Wambutt R."/>
            <person name="Murphy G."/>
            <person name="Volckaert G."/>
            <person name="Pohl T."/>
            <person name="Duesterhoeft A."/>
            <person name="Stiekema W."/>
            <person name="Entian K.-D."/>
            <person name="Terryn N."/>
            <person name="Harris B."/>
            <person name="Ansorge W."/>
            <person name="Brandt P."/>
            <person name="Grivell L.A."/>
            <person name="Rieger M."/>
            <person name="Weichselgartner M."/>
            <person name="de Simone V."/>
            <person name="Obermaier B."/>
            <person name="Mache R."/>
            <person name="Mueller M."/>
            <person name="Kreis M."/>
            <person name="Delseny M."/>
            <person name="Puigdomenech P."/>
            <person name="Watson M."/>
            <person name="Schmidtheini T."/>
            <person name="Reichert B."/>
            <person name="Portetelle D."/>
            <person name="Perez-Alonso M."/>
            <person name="Boutry M."/>
            <person name="Bancroft I."/>
            <person name="Vos P."/>
            <person name="Hoheisel J."/>
            <person name="Zimmermann W."/>
            <person name="Wedler H."/>
            <person name="Ridley P."/>
            <person name="Langham S.-A."/>
            <person name="McCullagh B."/>
            <person name="Bilham L."/>
            <person name="Robben J."/>
            <person name="van der Schueren J."/>
            <person name="Grymonprez B."/>
            <person name="Chuang Y.-J."/>
            <person name="Vandenbussche F."/>
            <person name="Braeken M."/>
            <person name="Weltjens I."/>
            <person name="Voet M."/>
            <person name="Bastiaens I."/>
            <person name="Aert R."/>
            <person name="Defoor E."/>
            <person name="Weitzenegger T."/>
            <person name="Bothe G."/>
            <person name="Ramsperger U."/>
            <person name="Hilbert H."/>
            <person name="Braun M."/>
            <person name="Holzer E."/>
            <person name="Brandt A."/>
            <person name="Peters S."/>
            <person name="van Staveren M."/>
            <person name="Dirkse W."/>
            <person name="Mooijman P."/>
            <person name="Klein Lankhorst R."/>
            <person name="Rose M."/>
            <person name="Hauf J."/>
            <person name="Koetter P."/>
            <person name="Berneiser S."/>
            <person name="Hempel S."/>
            <person name="Feldpausch M."/>
            <person name="Lamberth S."/>
            <person name="Van den Daele H."/>
            <person name="De Keyser A."/>
            <person name="Buysshaert C."/>
            <person name="Gielen J."/>
            <person name="Villarroel R."/>
            <person name="De Clercq R."/>
            <person name="van Montagu M."/>
            <person name="Rogers J."/>
            <person name="Cronin A."/>
            <person name="Quail M.A."/>
            <person name="Bray-Allen S."/>
            <person name="Clark L."/>
            <person name="Doggett J."/>
            <person name="Hall S."/>
            <person name="Kay M."/>
            <person name="Lennard N."/>
            <person name="McLay K."/>
            <person name="Mayes R."/>
            <person name="Pettett A."/>
            <person name="Rajandream M.A."/>
            <person name="Lyne M."/>
            <person name="Benes V."/>
            <person name="Rechmann S."/>
            <person name="Borkova D."/>
            <person name="Bloecker H."/>
            <person name="Scharfe M."/>
            <person name="Grimm M."/>
            <person name="Loehnert T.-H."/>
            <person name="Dose S."/>
            <person name="de Haan M."/>
            <person name="Maarse A.C."/>
            <person name="Schaefer M."/>
            <person name="Mueller-Auer S."/>
            <person name="Gabel C."/>
            <person name="Fuchs M."/>
            <person name="Fartmann B."/>
            <person name="Granderath K."/>
            <person name="Dauner D."/>
            <person name="Herzl A."/>
            <person name="Neumann S."/>
            <person name="Argiriou A."/>
            <person name="Vitale D."/>
            <person name="Liguori R."/>
            <person name="Piravandi E."/>
            <person name="Massenet O."/>
            <person name="Quigley F."/>
            <person name="Clabauld G."/>
            <person name="Muendlein A."/>
            <person name="Felber R."/>
            <person name="Schnabl S."/>
            <person name="Hiller R."/>
            <person name="Schmidt W."/>
            <person name="Lecharny A."/>
            <person name="Aubourg S."/>
            <person name="Chefdor F."/>
            <person name="Cooke R."/>
            <person name="Berger C."/>
            <person name="Monfort A."/>
            <person name="Casacuberta E."/>
            <person name="Gibbons T."/>
            <person name="Weber N."/>
            <person name="Vandenbol M."/>
            <person name="Bargues M."/>
            <person name="Terol J."/>
            <person name="Torres A."/>
            <person name="Perez-Perez A."/>
            <person name="Purnelle B."/>
            <person name="Bent E."/>
            <person name="Johnson S."/>
            <person name="Tacon D."/>
            <person name="Jesse T."/>
            <person name="Heijnen L."/>
            <person name="Schwarz S."/>
            <person name="Scholler P."/>
            <person name="Heber S."/>
            <person name="Francs P."/>
            <person name="Bielke C."/>
            <person name="Frishman D."/>
            <person name="Haase D."/>
            <person name="Lemcke K."/>
            <person name="Mewes H.-W."/>
            <person name="Stocker S."/>
            <person name="Zaccaria P."/>
            <person name="Bevan M."/>
            <person name="Wilson R.K."/>
            <person name="de la Bastide M."/>
            <person name="Habermann K."/>
            <person name="Parnell L."/>
            <person name="Dedhia N."/>
            <person name="Gnoj L."/>
            <person name="Schutz K."/>
            <person name="Huang E."/>
            <person name="Spiegel L."/>
            <person name="Sekhon M."/>
            <person name="Murray J."/>
            <person name="Sheet P."/>
            <person name="Cordes M."/>
            <person name="Abu-Threideh J."/>
            <person name="Stoneking T."/>
            <person name="Kalicki J."/>
            <person name="Graves T."/>
            <person name="Harmon G."/>
            <person name="Edwards J."/>
            <person name="Latreille P."/>
            <person name="Courtney L."/>
            <person name="Cloud J."/>
            <person name="Abbott A."/>
            <person name="Scott K."/>
            <person name="Johnson D."/>
            <person name="Minx P."/>
            <person name="Bentley D."/>
            <person name="Fulton B."/>
            <person name="Miller N."/>
            <person name="Greco T."/>
            <person name="Kemp K."/>
            <person name="Kramer J."/>
            <person name="Fulton L."/>
            <person name="Mardis E."/>
            <person name="Dante M."/>
            <person name="Pepin K."/>
            <person name="Hillier L.W."/>
            <person name="Nelson J."/>
            <person name="Spieth J."/>
            <person name="Ryan E."/>
            <person name="Andrews S."/>
            <person name="Geisel C."/>
            <person name="Layman D."/>
            <person name="Du H."/>
            <person name="Ali J."/>
            <person name="Berghoff A."/>
            <person name="Jones K."/>
            <person name="Drone K."/>
            <person name="Cotton M."/>
            <person name="Joshu C."/>
            <person name="Antonoiu B."/>
            <person name="Zidanic M."/>
            <person name="Strong C."/>
            <person name="Sun H."/>
            <person name="Lamar B."/>
            <person name="Yordan C."/>
            <person name="Ma P."/>
            <person name="Zhong J."/>
            <person name="Preston R."/>
            <person name="Vil D."/>
            <person name="Shekher M."/>
            <person name="Matero A."/>
            <person name="Shah R."/>
            <person name="Swaby I.K."/>
            <person name="O'Shaughnessy A."/>
            <person name="Rodriguez M."/>
            <person name="Hoffman J."/>
            <person name="Till S."/>
            <person name="Granat S."/>
            <person name="Shohdy N."/>
            <person name="Hasegawa A."/>
            <person name="Hameed A."/>
            <person name="Lodhi M."/>
            <person name="Johnson A."/>
            <person name="Chen E."/>
            <person name="Marra M.A."/>
            <person name="Martienssen R."/>
            <person name="McCombie W.R."/>
        </authorList>
    </citation>
    <scope>NUCLEOTIDE SEQUENCE [LARGE SCALE GENOMIC DNA]</scope>
    <source>
        <strain>cv. Columbia</strain>
    </source>
</reference>
<reference key="3">
    <citation type="journal article" date="2017" name="Plant J.">
        <title>Araport11: a complete reannotation of the Arabidopsis thaliana reference genome.</title>
        <authorList>
            <person name="Cheng C.Y."/>
            <person name="Krishnakumar V."/>
            <person name="Chan A.P."/>
            <person name="Thibaud-Nissen F."/>
            <person name="Schobel S."/>
            <person name="Town C.D."/>
        </authorList>
    </citation>
    <scope>GENOME REANNOTATION</scope>
    <source>
        <strain>cv. Columbia</strain>
    </source>
</reference>
<reference key="4">
    <citation type="submission" date="2005-03" db="EMBL/GenBank/DDBJ databases">
        <title>Large-scale analysis of RIKEN Arabidopsis full-length (RAFL) cDNAs.</title>
        <authorList>
            <person name="Totoki Y."/>
            <person name="Seki M."/>
            <person name="Ishida J."/>
            <person name="Nakajima M."/>
            <person name="Enju A."/>
            <person name="Kamiya A."/>
            <person name="Narusaka M."/>
            <person name="Shin-i T."/>
            <person name="Nakagawa M."/>
            <person name="Sakamoto N."/>
            <person name="Oishi K."/>
            <person name="Kohara Y."/>
            <person name="Kobayashi M."/>
            <person name="Toyoda A."/>
            <person name="Sakaki Y."/>
            <person name="Sakurai T."/>
            <person name="Iida K."/>
            <person name="Akiyama K."/>
            <person name="Satou M."/>
            <person name="Toyoda T."/>
            <person name="Konagaya A."/>
            <person name="Carninci P."/>
            <person name="Kawai J."/>
            <person name="Hayashizaki Y."/>
            <person name="Shinozaki K."/>
        </authorList>
    </citation>
    <scope>NUCLEOTIDE SEQUENCE [LARGE SCALE MRNA] OF 1-316</scope>
    <source>
        <strain>cv. Columbia</strain>
    </source>
</reference>